<evidence type="ECO:0000255" key="1">
    <source>
        <dbReference type="HAMAP-Rule" id="MF_00294"/>
    </source>
</evidence>
<sequence length="49" mass="5911">MRVNITLEHKESGERLYLTSKNKRNTPDRLQLKKYSPKLRKHVVFTEVK</sequence>
<comment type="similarity">
    <text evidence="1">Belongs to the bacterial ribosomal protein bL33 family.</text>
</comment>
<dbReference type="EMBL" id="CP000936">
    <property type="protein sequence ID" value="ACA35902.1"/>
    <property type="molecule type" value="Genomic_DNA"/>
</dbReference>
<dbReference type="SMR" id="B1I9V1"/>
<dbReference type="KEGG" id="spv:SPH_2327"/>
<dbReference type="HOGENOM" id="CLU_190949_3_2_9"/>
<dbReference type="Proteomes" id="UP000002163">
    <property type="component" value="Chromosome"/>
</dbReference>
<dbReference type="GO" id="GO:0005737">
    <property type="term" value="C:cytoplasm"/>
    <property type="evidence" value="ECO:0007669"/>
    <property type="project" value="UniProtKB-ARBA"/>
</dbReference>
<dbReference type="GO" id="GO:1990904">
    <property type="term" value="C:ribonucleoprotein complex"/>
    <property type="evidence" value="ECO:0007669"/>
    <property type="project" value="UniProtKB-KW"/>
</dbReference>
<dbReference type="GO" id="GO:0005840">
    <property type="term" value="C:ribosome"/>
    <property type="evidence" value="ECO:0007669"/>
    <property type="project" value="UniProtKB-KW"/>
</dbReference>
<dbReference type="GO" id="GO:0003735">
    <property type="term" value="F:structural constituent of ribosome"/>
    <property type="evidence" value="ECO:0007669"/>
    <property type="project" value="InterPro"/>
</dbReference>
<dbReference type="GO" id="GO:0006412">
    <property type="term" value="P:translation"/>
    <property type="evidence" value="ECO:0007669"/>
    <property type="project" value="UniProtKB-UniRule"/>
</dbReference>
<dbReference type="Gene3D" id="2.20.28.120">
    <property type="entry name" value="Ribosomal protein L33"/>
    <property type="match status" value="1"/>
</dbReference>
<dbReference type="HAMAP" id="MF_00294">
    <property type="entry name" value="Ribosomal_bL33"/>
    <property type="match status" value="1"/>
</dbReference>
<dbReference type="InterPro" id="IPR001705">
    <property type="entry name" value="Ribosomal_bL33"/>
</dbReference>
<dbReference type="InterPro" id="IPR018264">
    <property type="entry name" value="Ribosomal_bL33_CS"/>
</dbReference>
<dbReference type="InterPro" id="IPR038584">
    <property type="entry name" value="Ribosomal_bL33_sf"/>
</dbReference>
<dbReference type="InterPro" id="IPR011332">
    <property type="entry name" value="Ribosomal_zn-bd"/>
</dbReference>
<dbReference type="NCBIfam" id="NF001764">
    <property type="entry name" value="PRK00504.1"/>
    <property type="match status" value="1"/>
</dbReference>
<dbReference type="NCBIfam" id="NF001860">
    <property type="entry name" value="PRK00595.1"/>
    <property type="match status" value="1"/>
</dbReference>
<dbReference type="NCBIfam" id="TIGR01023">
    <property type="entry name" value="rpmG_bact"/>
    <property type="match status" value="1"/>
</dbReference>
<dbReference type="PANTHER" id="PTHR43168">
    <property type="entry name" value="50S RIBOSOMAL PROTEIN L33, CHLOROPLASTIC"/>
    <property type="match status" value="1"/>
</dbReference>
<dbReference type="PANTHER" id="PTHR43168:SF2">
    <property type="entry name" value="LARGE RIBOSOMAL SUBUNIT PROTEIN BL33C"/>
    <property type="match status" value="1"/>
</dbReference>
<dbReference type="Pfam" id="PF00471">
    <property type="entry name" value="Ribosomal_L33"/>
    <property type="match status" value="1"/>
</dbReference>
<dbReference type="SUPFAM" id="SSF57829">
    <property type="entry name" value="Zn-binding ribosomal proteins"/>
    <property type="match status" value="1"/>
</dbReference>
<dbReference type="PROSITE" id="PS00582">
    <property type="entry name" value="RIBOSOMAL_L33"/>
    <property type="match status" value="1"/>
</dbReference>
<accession>B1I9V1</accession>
<gene>
    <name evidence="1" type="primary">rpmG2</name>
    <name type="ordered locus">SPH_2327</name>
</gene>
<feature type="chain" id="PRO_0000356712" description="Large ribosomal subunit protein bL33B">
    <location>
        <begin position="1"/>
        <end position="49"/>
    </location>
</feature>
<proteinExistence type="inferred from homology"/>
<reference key="1">
    <citation type="journal article" date="2010" name="Genome Biol.">
        <title>Structure and dynamics of the pan-genome of Streptococcus pneumoniae and closely related species.</title>
        <authorList>
            <person name="Donati C."/>
            <person name="Hiller N.L."/>
            <person name="Tettelin H."/>
            <person name="Muzzi A."/>
            <person name="Croucher N.J."/>
            <person name="Angiuoli S.V."/>
            <person name="Oggioni M."/>
            <person name="Dunning Hotopp J.C."/>
            <person name="Hu F.Z."/>
            <person name="Riley D.R."/>
            <person name="Covacci A."/>
            <person name="Mitchell T.J."/>
            <person name="Bentley S.D."/>
            <person name="Kilian M."/>
            <person name="Ehrlich G.D."/>
            <person name="Rappuoli R."/>
            <person name="Moxon E.R."/>
            <person name="Masignani V."/>
        </authorList>
    </citation>
    <scope>NUCLEOTIDE SEQUENCE [LARGE SCALE GENOMIC DNA]</scope>
    <source>
        <strain>Hungary19A-6</strain>
    </source>
</reference>
<keyword id="KW-0687">Ribonucleoprotein</keyword>
<keyword id="KW-0689">Ribosomal protein</keyword>
<protein>
    <recommendedName>
        <fullName evidence="1">Large ribosomal subunit protein bL33B</fullName>
    </recommendedName>
    <alternativeName>
        <fullName evidence="1">50S ribosomal protein L33 2</fullName>
    </alternativeName>
</protein>
<organism>
    <name type="scientific">Streptococcus pneumoniae (strain Hungary19A-6)</name>
    <dbReference type="NCBI Taxonomy" id="487214"/>
    <lineage>
        <taxon>Bacteria</taxon>
        <taxon>Bacillati</taxon>
        <taxon>Bacillota</taxon>
        <taxon>Bacilli</taxon>
        <taxon>Lactobacillales</taxon>
        <taxon>Streptococcaceae</taxon>
        <taxon>Streptococcus</taxon>
    </lineage>
</organism>
<name>RL332_STRPI</name>